<gene>
    <name evidence="1" type="primary">glmS</name>
    <name type="ordered locus">SpyM3_0910</name>
</gene>
<sequence>MCGIVGVVGNRNATDILMQGLEKLEYRGYDSAGIFVANANQTNLIKSVGRIADLRAKIGIDVAGSTGIGHTRWATHGQSTEDNAHPHTSQTGRFVLVHNGVIENYLHIKTEFLAGHDFKGQTDTEIAVHLIGKFVEEDKLSVLEAFKKALSIIEGSYAFALMDSQATDTIYVAKNKSPLLIGLGEGYNMVCSDAMAMIRETSEFMEIHDKELVILTKDKVTVTDYDGKELIRDSYTAELDLSDIGKGTYPFYMLKEIDEQPTVMRQLISTYADETGNVQVDPAIITSIQEADRLYILAAGTSYHAGFATKNMLEQLTDTPVELGVASEWGYHMPLLSKKPMFILLSQSGETADSRQVLVKANAMGIPSLTVTNVPGSTLSRESTYTMLIHAGPEIAVASTKAYTAQIAALAFLAKAVGEANGKQEALDFNLVHELSLVAQSIEATLSEKDLVAEKVQALLTTTRNAFYIGRGNDYYVAMEAALKLKEISYIQCEGFAAGELKHGTISLIEEDTPVIALISSSQLVASHTRGNIQEVAARGAHVLTVVEEGLDREGDDIIVNKVHPFLAPIAMVIPTQLIAYYASLQRGLDVDKPRNLAKAVTVE</sequence>
<evidence type="ECO:0000255" key="1">
    <source>
        <dbReference type="HAMAP-Rule" id="MF_00164"/>
    </source>
</evidence>
<evidence type="ECO:0000305" key="2"/>
<organism>
    <name type="scientific">Streptococcus pyogenes serotype M3 (strain ATCC BAA-595 / MGAS315)</name>
    <dbReference type="NCBI Taxonomy" id="198466"/>
    <lineage>
        <taxon>Bacteria</taxon>
        <taxon>Bacillati</taxon>
        <taxon>Bacillota</taxon>
        <taxon>Bacilli</taxon>
        <taxon>Lactobacillales</taxon>
        <taxon>Streptococcaceae</taxon>
        <taxon>Streptococcus</taxon>
    </lineage>
</organism>
<proteinExistence type="inferred from homology"/>
<name>GLMS_STRP3</name>
<accession>P0DB32</accession>
<accession>Q878N9</accession>
<accession>Q8K7A4</accession>
<feature type="initiator methionine" description="Removed" evidence="1">
    <location>
        <position position="1"/>
    </location>
</feature>
<feature type="chain" id="PRO_0000135394" description="Glutamine--fructose-6-phosphate aminotransferase [isomerizing]">
    <location>
        <begin position="2"/>
        <end position="604"/>
    </location>
</feature>
<feature type="domain" description="Glutamine amidotransferase type-2" evidence="1">
    <location>
        <begin position="2"/>
        <end position="218"/>
    </location>
</feature>
<feature type="domain" description="SIS 1" evidence="1">
    <location>
        <begin position="284"/>
        <end position="423"/>
    </location>
</feature>
<feature type="domain" description="SIS 2" evidence="1">
    <location>
        <begin position="452"/>
        <end position="594"/>
    </location>
</feature>
<feature type="active site" description="Nucleophile; for GATase activity" evidence="1">
    <location>
        <position position="2"/>
    </location>
</feature>
<feature type="active site" description="For Fru-6P isomerization activity" evidence="1">
    <location>
        <position position="599"/>
    </location>
</feature>
<reference key="1">
    <citation type="journal article" date="2002" name="Proc. Natl. Acad. Sci. U.S.A.">
        <title>Genome sequence of a serotype M3 strain of group A Streptococcus: phage-encoded toxins, the high-virulence phenotype, and clone emergence.</title>
        <authorList>
            <person name="Beres S.B."/>
            <person name="Sylva G.L."/>
            <person name="Barbian K.D."/>
            <person name="Lei B."/>
            <person name="Hoff J.S."/>
            <person name="Mammarella N.D."/>
            <person name="Liu M.-Y."/>
            <person name="Smoot J.C."/>
            <person name="Porcella S.F."/>
            <person name="Parkins L.D."/>
            <person name="Campbell D.S."/>
            <person name="Smith T.M."/>
            <person name="McCormick J.K."/>
            <person name="Leung D.Y.M."/>
            <person name="Schlievert P.M."/>
            <person name="Musser J.M."/>
        </authorList>
    </citation>
    <scope>NUCLEOTIDE SEQUENCE [LARGE SCALE GENOMIC DNA]</scope>
    <source>
        <strain>ATCC BAA-595 / MGAS315</strain>
    </source>
</reference>
<dbReference type="EC" id="2.6.1.16" evidence="1"/>
<dbReference type="EMBL" id="AE014074">
    <property type="protein sequence ID" value="AAM79517.1"/>
    <property type="status" value="ALT_INIT"/>
    <property type="molecule type" value="Genomic_DNA"/>
</dbReference>
<dbReference type="RefSeq" id="WP_002984451.1">
    <property type="nucleotide sequence ID" value="NC_004070.1"/>
</dbReference>
<dbReference type="SMR" id="P0DB32"/>
<dbReference type="MEROPS" id="C44.A08"/>
<dbReference type="KEGG" id="spg:SpyM3_0910"/>
<dbReference type="HOGENOM" id="CLU_012520_7_1_9"/>
<dbReference type="Proteomes" id="UP000000564">
    <property type="component" value="Chromosome"/>
</dbReference>
<dbReference type="GO" id="GO:0005829">
    <property type="term" value="C:cytosol"/>
    <property type="evidence" value="ECO:0007669"/>
    <property type="project" value="TreeGrafter"/>
</dbReference>
<dbReference type="GO" id="GO:0097367">
    <property type="term" value="F:carbohydrate derivative binding"/>
    <property type="evidence" value="ECO:0007669"/>
    <property type="project" value="InterPro"/>
</dbReference>
<dbReference type="GO" id="GO:0004360">
    <property type="term" value="F:glutamine-fructose-6-phosphate transaminase (isomerizing) activity"/>
    <property type="evidence" value="ECO:0007669"/>
    <property type="project" value="UniProtKB-UniRule"/>
</dbReference>
<dbReference type="GO" id="GO:0005975">
    <property type="term" value="P:carbohydrate metabolic process"/>
    <property type="evidence" value="ECO:0007669"/>
    <property type="project" value="UniProtKB-UniRule"/>
</dbReference>
<dbReference type="GO" id="GO:0006002">
    <property type="term" value="P:fructose 6-phosphate metabolic process"/>
    <property type="evidence" value="ECO:0007669"/>
    <property type="project" value="TreeGrafter"/>
</dbReference>
<dbReference type="GO" id="GO:0006487">
    <property type="term" value="P:protein N-linked glycosylation"/>
    <property type="evidence" value="ECO:0007669"/>
    <property type="project" value="TreeGrafter"/>
</dbReference>
<dbReference type="GO" id="GO:0006047">
    <property type="term" value="P:UDP-N-acetylglucosamine metabolic process"/>
    <property type="evidence" value="ECO:0007669"/>
    <property type="project" value="TreeGrafter"/>
</dbReference>
<dbReference type="CDD" id="cd00714">
    <property type="entry name" value="GFAT"/>
    <property type="match status" value="1"/>
</dbReference>
<dbReference type="CDD" id="cd05008">
    <property type="entry name" value="SIS_GlmS_GlmD_1"/>
    <property type="match status" value="1"/>
</dbReference>
<dbReference type="CDD" id="cd05009">
    <property type="entry name" value="SIS_GlmS_GlmD_2"/>
    <property type="match status" value="1"/>
</dbReference>
<dbReference type="FunFam" id="3.40.50.10490:FF:000001">
    <property type="entry name" value="Glutamine--fructose-6-phosphate aminotransferase [isomerizing]"/>
    <property type="match status" value="1"/>
</dbReference>
<dbReference type="FunFam" id="3.40.50.10490:FF:000022">
    <property type="entry name" value="Glutamine--fructose-6-phosphate aminotransferase [isomerizing]"/>
    <property type="match status" value="1"/>
</dbReference>
<dbReference type="FunFam" id="3.60.20.10:FF:000006">
    <property type="entry name" value="Glutamine--fructose-6-phosphate aminotransferase [isomerizing]"/>
    <property type="match status" value="1"/>
</dbReference>
<dbReference type="Gene3D" id="3.40.50.10490">
    <property type="entry name" value="Glucose-6-phosphate isomerase like protein, domain 1"/>
    <property type="match status" value="2"/>
</dbReference>
<dbReference type="Gene3D" id="3.60.20.10">
    <property type="entry name" value="Glutamine Phosphoribosylpyrophosphate, subunit 1, domain 1"/>
    <property type="match status" value="1"/>
</dbReference>
<dbReference type="HAMAP" id="MF_00164">
    <property type="entry name" value="GlmS"/>
    <property type="match status" value="1"/>
</dbReference>
<dbReference type="InterPro" id="IPR017932">
    <property type="entry name" value="GATase_2_dom"/>
</dbReference>
<dbReference type="InterPro" id="IPR005855">
    <property type="entry name" value="GFAT"/>
</dbReference>
<dbReference type="InterPro" id="IPR047084">
    <property type="entry name" value="GFAT_N"/>
</dbReference>
<dbReference type="InterPro" id="IPR035466">
    <property type="entry name" value="GlmS/AgaS_SIS"/>
</dbReference>
<dbReference type="InterPro" id="IPR035490">
    <property type="entry name" value="GlmS/FrlB_SIS"/>
</dbReference>
<dbReference type="InterPro" id="IPR029055">
    <property type="entry name" value="Ntn_hydrolases_N"/>
</dbReference>
<dbReference type="InterPro" id="IPR001347">
    <property type="entry name" value="SIS_dom"/>
</dbReference>
<dbReference type="InterPro" id="IPR046348">
    <property type="entry name" value="SIS_dom_sf"/>
</dbReference>
<dbReference type="NCBIfam" id="TIGR01135">
    <property type="entry name" value="glmS"/>
    <property type="match status" value="1"/>
</dbReference>
<dbReference type="NCBIfam" id="NF001484">
    <property type="entry name" value="PRK00331.1"/>
    <property type="match status" value="1"/>
</dbReference>
<dbReference type="PANTHER" id="PTHR10937">
    <property type="entry name" value="GLUCOSAMINE--FRUCTOSE-6-PHOSPHATE AMINOTRANSFERASE, ISOMERIZING"/>
    <property type="match status" value="1"/>
</dbReference>
<dbReference type="PANTHER" id="PTHR10937:SF0">
    <property type="entry name" value="GLUTAMINE--FRUCTOSE-6-PHOSPHATE TRANSAMINASE (ISOMERIZING)"/>
    <property type="match status" value="1"/>
</dbReference>
<dbReference type="Pfam" id="PF13522">
    <property type="entry name" value="GATase_6"/>
    <property type="match status" value="1"/>
</dbReference>
<dbReference type="Pfam" id="PF01380">
    <property type="entry name" value="SIS"/>
    <property type="match status" value="2"/>
</dbReference>
<dbReference type="SUPFAM" id="SSF56235">
    <property type="entry name" value="N-terminal nucleophile aminohydrolases (Ntn hydrolases)"/>
    <property type="match status" value="1"/>
</dbReference>
<dbReference type="SUPFAM" id="SSF53697">
    <property type="entry name" value="SIS domain"/>
    <property type="match status" value="1"/>
</dbReference>
<dbReference type="PROSITE" id="PS51278">
    <property type="entry name" value="GATASE_TYPE_2"/>
    <property type="match status" value="1"/>
</dbReference>
<dbReference type="PROSITE" id="PS51464">
    <property type="entry name" value="SIS"/>
    <property type="match status" value="2"/>
</dbReference>
<protein>
    <recommendedName>
        <fullName evidence="1">Glutamine--fructose-6-phosphate aminotransferase [isomerizing]</fullName>
        <ecNumber evidence="1">2.6.1.16</ecNumber>
    </recommendedName>
    <alternativeName>
        <fullName evidence="1">D-fructose-6-phosphate amidotransferase</fullName>
    </alternativeName>
    <alternativeName>
        <fullName evidence="1">GFAT</fullName>
    </alternativeName>
    <alternativeName>
        <fullName evidence="1">Glucosamine-6-phosphate synthase</fullName>
    </alternativeName>
    <alternativeName>
        <fullName evidence="1">Hexosephosphate aminotransferase</fullName>
    </alternativeName>
    <alternativeName>
        <fullName evidence="1">L-glutamine--D-fructose-6-phosphate amidotransferase</fullName>
    </alternativeName>
</protein>
<comment type="function">
    <text evidence="1">Catalyzes the first step in hexosamine metabolism, converting fructose-6P into glucosamine-6P using glutamine as a nitrogen source.</text>
</comment>
<comment type="catalytic activity">
    <reaction evidence="1">
        <text>D-fructose 6-phosphate + L-glutamine = D-glucosamine 6-phosphate + L-glutamate</text>
        <dbReference type="Rhea" id="RHEA:13237"/>
        <dbReference type="ChEBI" id="CHEBI:29985"/>
        <dbReference type="ChEBI" id="CHEBI:58359"/>
        <dbReference type="ChEBI" id="CHEBI:58725"/>
        <dbReference type="ChEBI" id="CHEBI:61527"/>
        <dbReference type="EC" id="2.6.1.16"/>
    </reaction>
</comment>
<comment type="subunit">
    <text evidence="1">Homodimer.</text>
</comment>
<comment type="subcellular location">
    <subcellularLocation>
        <location evidence="1">Cytoplasm</location>
    </subcellularLocation>
</comment>
<comment type="sequence caution" evidence="2">
    <conflict type="erroneous initiation">
        <sequence resource="EMBL-CDS" id="AAM79517"/>
    </conflict>
</comment>
<keyword id="KW-0032">Aminotransferase</keyword>
<keyword id="KW-0963">Cytoplasm</keyword>
<keyword id="KW-0315">Glutamine amidotransferase</keyword>
<keyword id="KW-0677">Repeat</keyword>
<keyword id="KW-0808">Transferase</keyword>